<gene>
    <name evidence="9" type="primary">ERG1</name>
    <name type="ordered locus">CAALFM_C108590CA</name>
    <name type="ORF">CaO19.406</name>
    <name type="ORF">CaO19.8036</name>
</gene>
<name>ERG1_CANAL</name>
<organism>
    <name type="scientific">Candida albicans (strain SC5314 / ATCC MYA-2876)</name>
    <name type="common">Yeast</name>
    <dbReference type="NCBI Taxonomy" id="237561"/>
    <lineage>
        <taxon>Eukaryota</taxon>
        <taxon>Fungi</taxon>
        <taxon>Dikarya</taxon>
        <taxon>Ascomycota</taxon>
        <taxon>Saccharomycotina</taxon>
        <taxon>Pichiomycetes</taxon>
        <taxon>Debaryomycetaceae</taxon>
        <taxon>Candida/Lodderomyces clade</taxon>
        <taxon>Candida</taxon>
    </lineage>
</organism>
<proteinExistence type="evidence at protein level"/>
<keyword id="KW-0256">Endoplasmic reticulum</keyword>
<keyword id="KW-0274">FAD</keyword>
<keyword id="KW-0285">Flavoprotein</keyword>
<keyword id="KW-0472">Membrane</keyword>
<keyword id="KW-0492">Microsome</keyword>
<keyword id="KW-0560">Oxidoreductase</keyword>
<keyword id="KW-1185">Reference proteome</keyword>
<keyword id="KW-0812">Transmembrane</keyword>
<keyword id="KW-1133">Transmembrane helix</keyword>
<sequence length="496" mass="55298">MSSVKYDAIIIGAGVIGPTIATAFARQGRKVLIVERDWSKPDRIVGELMQPAGIKALRELGMIKAINNIRAVDCTGYYIKYYDETITIPYPLKKDACITNPVKPVPDAVDGVNDKLDSDSTLNVDDWDFDERVRGAAFHHGDFLMNLRQICRDEPNVTAVEATVTKILRDPSDPNTVIGVQTKQPSGTVDYHAKLTISCDGIYSKFRKELSPTNVPTIGSYFIGLYLKNAELPAKGKGHVLLGGHAPALIYSVSPTETRVLCVYVSSKPPSAANDAVYKYLRDNILPAIPKETVPAFKEALEERKFRIMPNQYLSAMKQGSENHKGFILLGDSLNMRHPLTGGGMTVGLNDSVLLAKLLHPKFVEDFDDHQLIAKRLKTFHRKRKNLDAVINTLSISLYSLFAADKKPLRILRNGCFKYFQRGGECVNGPIGLLSGMLPFPMLLFNHFFSVAFYSVYLNFIERGLLGFPLALFEAFEVLFTAIVIFTPYLWNEIVR</sequence>
<protein>
    <recommendedName>
        <fullName evidence="8">Squalene epoxidase ERG1</fullName>
        <shortName evidence="8">SE</shortName>
        <ecNumber evidence="5 6 7">1.14.14.17</ecNumber>
    </recommendedName>
    <alternativeName>
        <fullName evidence="8">Ergosterol biosynthesis protein 1</fullName>
    </alternativeName>
    <alternativeName>
        <fullName evidence="10">Squalene monooxygenase ERG1</fullName>
    </alternativeName>
</protein>
<dbReference type="EC" id="1.14.14.17" evidence="5 6 7"/>
<dbReference type="EMBL" id="D88252">
    <property type="protein sequence ID" value="BAA13565.1"/>
    <property type="molecule type" value="Genomic_DNA"/>
</dbReference>
<dbReference type="EMBL" id="U69674">
    <property type="protein sequence ID" value="AAC49715.1"/>
    <property type="molecule type" value="Genomic_DNA"/>
</dbReference>
<dbReference type="EMBL" id="CP017623">
    <property type="protein sequence ID" value="AOW26497.1"/>
    <property type="molecule type" value="Genomic_DNA"/>
</dbReference>
<dbReference type="RefSeq" id="XP_711894.1">
    <property type="nucleotide sequence ID" value="XM_706801.1"/>
</dbReference>
<dbReference type="SMR" id="Q92206"/>
<dbReference type="BioGRID" id="1229551">
    <property type="interactions" value="1"/>
</dbReference>
<dbReference type="FunCoup" id="Q92206">
    <property type="interactions" value="199"/>
</dbReference>
<dbReference type="STRING" id="237561.Q92206"/>
<dbReference type="BindingDB" id="Q92206"/>
<dbReference type="ChEMBL" id="CHEMBL1897"/>
<dbReference type="DrugBank" id="DB01091">
    <property type="generic name" value="Butenafine"/>
</dbReference>
<dbReference type="DrugBank" id="DB00857">
    <property type="generic name" value="Terbinafine"/>
</dbReference>
<dbReference type="DrugBank" id="DB00525">
    <property type="generic name" value="Tolnaftate"/>
</dbReference>
<dbReference type="DrugCentral" id="Q92206"/>
<dbReference type="EnsemblFungi" id="C1_08590C_A-T">
    <property type="protein sequence ID" value="C1_08590C_A-T-p1"/>
    <property type="gene ID" value="C1_08590C_A"/>
</dbReference>
<dbReference type="GeneID" id="3646509"/>
<dbReference type="KEGG" id="cal:CAALFM_C108590CA"/>
<dbReference type="CGD" id="CAL0000179458">
    <property type="gene designation" value="ERG1"/>
</dbReference>
<dbReference type="VEuPathDB" id="FungiDB:C1_08590C_A"/>
<dbReference type="eggNOG" id="KOG1298">
    <property type="taxonomic scope" value="Eukaryota"/>
</dbReference>
<dbReference type="HOGENOM" id="CLU_026390_0_0_1"/>
<dbReference type="InParanoid" id="Q92206"/>
<dbReference type="OMA" id="AKRTFYW"/>
<dbReference type="OrthoDB" id="1678617at2759"/>
<dbReference type="SABIO-RK" id="Q92206"/>
<dbReference type="UniPathway" id="UPA00767">
    <property type="reaction ID" value="UER00752"/>
</dbReference>
<dbReference type="PRO" id="PR:Q92206"/>
<dbReference type="Proteomes" id="UP000000559">
    <property type="component" value="Chromosome 1"/>
</dbReference>
<dbReference type="GO" id="GO:0005783">
    <property type="term" value="C:endoplasmic reticulum"/>
    <property type="evidence" value="ECO:0000318"/>
    <property type="project" value="GO_Central"/>
</dbReference>
<dbReference type="GO" id="GO:0005789">
    <property type="term" value="C:endoplasmic reticulum membrane"/>
    <property type="evidence" value="ECO:0007669"/>
    <property type="project" value="UniProtKB-SubCell"/>
</dbReference>
<dbReference type="GO" id="GO:0005886">
    <property type="term" value="C:plasma membrane"/>
    <property type="evidence" value="ECO:0000314"/>
    <property type="project" value="CGD"/>
</dbReference>
<dbReference type="GO" id="GO:0050660">
    <property type="term" value="F:flavin adenine dinucleotide binding"/>
    <property type="evidence" value="ECO:0007669"/>
    <property type="project" value="InterPro"/>
</dbReference>
<dbReference type="GO" id="GO:0004506">
    <property type="term" value="F:squalene monooxygenase activity"/>
    <property type="evidence" value="ECO:0000314"/>
    <property type="project" value="CGD"/>
</dbReference>
<dbReference type="GO" id="GO:0036187">
    <property type="term" value="P:cell growth mode switching, budding to filamentous"/>
    <property type="evidence" value="ECO:0000315"/>
    <property type="project" value="CGD"/>
</dbReference>
<dbReference type="GO" id="GO:0009267">
    <property type="term" value="P:cellular response to starvation"/>
    <property type="evidence" value="ECO:0000315"/>
    <property type="project" value="CGD"/>
</dbReference>
<dbReference type="GO" id="GO:0006696">
    <property type="term" value="P:ergosterol biosynthetic process"/>
    <property type="evidence" value="ECO:0000315"/>
    <property type="project" value="CGD"/>
</dbReference>
<dbReference type="GO" id="GO:0030447">
    <property type="term" value="P:filamentous growth"/>
    <property type="evidence" value="ECO:0000315"/>
    <property type="project" value="CGD"/>
</dbReference>
<dbReference type="GO" id="GO:0036180">
    <property type="term" value="P:filamentous growth of a population of unicellular organisms in response to biotic stimulus"/>
    <property type="evidence" value="ECO:0000315"/>
    <property type="project" value="CGD"/>
</dbReference>
<dbReference type="GO" id="GO:0036171">
    <property type="term" value="P:filamentous growth of a population of unicellular organisms in response to chemical stimulus"/>
    <property type="evidence" value="ECO:0000315"/>
    <property type="project" value="CGD"/>
</dbReference>
<dbReference type="GO" id="GO:0036170">
    <property type="term" value="P:filamentous growth of a population of unicellular organisms in response to starvation"/>
    <property type="evidence" value="ECO:0000315"/>
    <property type="project" value="CGD"/>
</dbReference>
<dbReference type="GO" id="GO:0051668">
    <property type="term" value="P:localization within membrane"/>
    <property type="evidence" value="ECO:0000315"/>
    <property type="project" value="CGD"/>
</dbReference>
<dbReference type="Gene3D" id="3.50.50.60">
    <property type="entry name" value="FAD/NAD(P)-binding domain"/>
    <property type="match status" value="2"/>
</dbReference>
<dbReference type="InterPro" id="IPR036188">
    <property type="entry name" value="FAD/NAD-bd_sf"/>
</dbReference>
<dbReference type="InterPro" id="IPR013698">
    <property type="entry name" value="Squalene_epoxidase"/>
</dbReference>
<dbReference type="InterPro" id="IPR040125">
    <property type="entry name" value="Squalene_monox"/>
</dbReference>
<dbReference type="PANTHER" id="PTHR10835">
    <property type="entry name" value="SQUALENE MONOOXYGENASE"/>
    <property type="match status" value="1"/>
</dbReference>
<dbReference type="PANTHER" id="PTHR10835:SF0">
    <property type="entry name" value="SQUALENE MONOOXYGENASE"/>
    <property type="match status" value="1"/>
</dbReference>
<dbReference type="Pfam" id="PF08491">
    <property type="entry name" value="SE"/>
    <property type="match status" value="1"/>
</dbReference>
<dbReference type="PRINTS" id="PR00420">
    <property type="entry name" value="RNGMNOXGNASE"/>
</dbReference>
<dbReference type="SUPFAM" id="SSF51905">
    <property type="entry name" value="FAD/NAD(P)-binding domain"/>
    <property type="match status" value="1"/>
</dbReference>
<comment type="function">
    <text evidence="4 5 6 7 10">Squalene epoxidase; part of the third module of ergosterol biosynthesis pathway that includes the late steps of the pathway (PubMed:15845783, PubMed:3877503, PubMed:6378256, PubMed:9161422). Erg1 catalyzes the epoxidation of squalene into 2,3-epoxysqualene (PubMed:15845783, PubMed:3877503, PubMed:6378256, PubMed:9161422). The third module or late pathway involves the ergosterol synthesis itself through consecutive reactions that mainly occur in the endoplasmic reticulum (ER) membrane. Firstly, the squalene synthase ERG9 catalyzes the condensation of 2 farnesyl pyrophosphate moieties to form squalene, which is the precursor of all steroids. Squalene synthase is crucial for balancing the incorporation of farnesyl diphosphate (FPP) into sterol and nonsterol isoprene synthesis. Secondly, the squalene epoxidase ERG1 catalyzes the stereospecific oxidation of squalene to (S)-2,3-epoxysqualene, which is considered to be a rate-limiting enzyme in steroid biosynthesis. Then, the lanosterol synthase ERG7 catalyzes the cyclization of (S)-2,3 oxidosqualene to lanosterol, a reaction that forms the sterol core. In the next steps, lanosterol is transformed to zymosterol through a complex process involving various demethylation, reduction and desaturation reactions. The lanosterol 14-alpha-demethylase ERG11 (also known as CYP51) catalyzes C14-demethylation of lanosterol to produce 4,4'-dimethyl cholesta-8,14,24-triene-3-beta-ol, which is critical for ergosterol biosynthesis. The C-14 reductase ERG24 reduces the C14=C15 double bond of 4,4-dimethyl-cholesta-8,14,24-trienol to produce 4,4-dimethyl-cholesta-8,24-dienol. 4,4-dimethyl-cholesta-8,24-dienol is substrate of the C-4 demethylation complex ERG25-ERG26-ERG27 in which ERG25 catalyzes the three-step monooxygenation required for the demethylation of 4,4-dimethyl and 4alpha-methylsterols, ERG26 catalyzes the oxidative decarboxylation that results in a reduction of the 3-beta-hydroxy group at the C-3 carbon to an oxo group, and ERG27 is responsible for the reduction of the keto group on the C-3. ERG28 has a role as a scaffold to help anchor ERG25, ERG26 and ERG27 to the endoplasmic reticulum and ERG29 regulates the activity of the iron-containing C4-methylsterol oxidase ERG25. Then, the sterol 24-C-methyltransferase ERG6 catalyzes the methyl transfer from S-adenosyl-methionine to the C-24 of zymosterol to form fecosterol. The C-8 sterol isomerase ERG2 catalyzes the reaction which results in unsaturation at C-7 in the B ring of sterols and thus converts fecosterol to episterol. The sterol-C5-desaturase ERG3 then catalyzes the introduction of a C-5 double bond in the B ring to produce 5-dehydroepisterol. The C-22 sterol desaturase ERG5 further converts 5-dehydroepisterol into ergosta-5,7,22,24(28)-tetraen-3beta-ol by forming the C-22(23) double bond in the sterol side chain. Finally, ergosta-5,7,22,24(28)-tetraen-3beta-ol is substrate of the C-24(28) sterol reductase ERG4 to produce ergosterol (Probable).</text>
</comment>
<comment type="catalytic activity">
    <reaction evidence="5 6 7">
        <text>squalene + reduced [NADPH--hemoprotein reductase] + O2 = (S)-2,3-epoxysqualene + oxidized [NADPH--hemoprotein reductase] + H2O + H(+)</text>
        <dbReference type="Rhea" id="RHEA:25282"/>
        <dbReference type="Rhea" id="RHEA-COMP:11964"/>
        <dbReference type="Rhea" id="RHEA-COMP:11965"/>
        <dbReference type="ChEBI" id="CHEBI:15377"/>
        <dbReference type="ChEBI" id="CHEBI:15378"/>
        <dbReference type="ChEBI" id="CHEBI:15379"/>
        <dbReference type="ChEBI" id="CHEBI:15440"/>
        <dbReference type="ChEBI" id="CHEBI:15441"/>
        <dbReference type="ChEBI" id="CHEBI:57618"/>
        <dbReference type="ChEBI" id="CHEBI:58210"/>
        <dbReference type="EC" id="1.14.14.17"/>
    </reaction>
    <physiologicalReaction direction="left-to-right" evidence="5 6 7">
        <dbReference type="Rhea" id="RHEA:25283"/>
    </physiologicalReaction>
</comment>
<comment type="cofactor">
    <cofactor evidence="2">
        <name>FAD</name>
        <dbReference type="ChEBI" id="CHEBI:57692"/>
    </cofactor>
</comment>
<comment type="activity regulation">
    <text evidence="5 6">Activity is completely abolished by Triton X-100, deoxycholate or Cu(2+), and partially inhibited by thiol reagents, rotenone and antimycin A (PubMed:6378256). The allylamine antimycotic agents naftifine and SF 86-327are potent inhibitors and show apparently non-competitive kinetics with respect to the substrate squalene (PubMed:3877503).</text>
</comment>
<comment type="biophysicochemical properties">
    <kinetics>
        <KM evidence="6">50 uM for squalene</KM>
    </kinetics>
</comment>
<comment type="pathway">
    <text evidence="6 7">Terpene metabolism; lanosterol biosynthesis; lanosterol from farnesyl diphosphate: step 2/3.</text>
</comment>
<comment type="subcellular location">
    <subcellularLocation>
        <location evidence="1">Microsome membrane</location>
        <topology evidence="1">Multi-pass membrane protein</topology>
    </subcellularLocation>
    <subcellularLocation>
        <location evidence="1">Endoplasmic reticulum membrane</location>
        <topology evidence="1">Multi-pass membrane protein</topology>
    </subcellularLocation>
</comment>
<comment type="disruption phenotype">
    <text evidence="4">Impairs ergosterol production and leads to increased susceptibility to terbinafine (PubMed:15845783). Also leads to susceptibility to polyenes, nystatin and amphotericin B (PubMed:15845783). Impairs the localization of the membrane-bound transporter CDR1 (PubMed:15845783). Reduces the formation of hyphae (PubMed:15845783).</text>
</comment>
<comment type="similarity">
    <text evidence="10">Belongs to the squalene monooxygenase family.</text>
</comment>
<feature type="chain" id="PRO_0000209848" description="Squalene epoxidase ERG1">
    <location>
        <begin position="1"/>
        <end position="496"/>
    </location>
</feature>
<feature type="transmembrane region" description="Helical" evidence="3">
    <location>
        <begin position="4"/>
        <end position="24"/>
    </location>
</feature>
<feature type="transmembrane region" description="Helical" evidence="3">
    <location>
        <begin position="431"/>
        <end position="451"/>
    </location>
</feature>
<feature type="transmembrane region" description="Helical" evidence="3">
    <location>
        <begin position="466"/>
        <end position="486"/>
    </location>
</feature>
<feature type="binding site" evidence="2">
    <location>
        <begin position="15"/>
        <end position="16"/>
    </location>
    <ligand>
        <name>FAD</name>
        <dbReference type="ChEBI" id="CHEBI:57692"/>
    </ligand>
</feature>
<feature type="binding site" evidence="2">
    <location>
        <begin position="35"/>
        <end position="36"/>
    </location>
    <ligand>
        <name>FAD</name>
        <dbReference type="ChEBI" id="CHEBI:57692"/>
    </ligand>
</feature>
<feature type="binding site" evidence="2">
    <location>
        <position position="43"/>
    </location>
    <ligand>
        <name>FAD</name>
        <dbReference type="ChEBI" id="CHEBI:57692"/>
    </ligand>
</feature>
<feature type="binding site" evidence="2">
    <location>
        <position position="148"/>
    </location>
    <ligand>
        <name>FAD</name>
        <dbReference type="ChEBI" id="CHEBI:57692"/>
    </ligand>
</feature>
<feature type="binding site" evidence="2">
    <location>
        <position position="164"/>
    </location>
    <ligand>
        <name>FAD</name>
        <dbReference type="ChEBI" id="CHEBI:57692"/>
    </ligand>
</feature>
<feature type="binding site" evidence="2">
    <location>
        <position position="332"/>
    </location>
    <ligand>
        <name>FAD</name>
        <dbReference type="ChEBI" id="CHEBI:57692"/>
    </ligand>
</feature>
<feature type="binding site" evidence="2">
    <location>
        <position position="345"/>
    </location>
    <ligand>
        <name>FAD</name>
        <dbReference type="ChEBI" id="CHEBI:57692"/>
    </ligand>
</feature>
<feature type="site" description="Important for enzyme activity" evidence="2">
    <location>
        <position position="77"/>
    </location>
</feature>
<reference key="1">
    <citation type="submission" date="1996-11" db="EMBL/GenBank/DDBJ databases">
        <authorList>
            <person name="Ishii N."/>
            <person name="Yamamoto M."/>
            <person name="Arisawa M."/>
            <person name="Aoki Y."/>
        </authorList>
    </citation>
    <scope>NUCLEOTIDE SEQUENCE [GENOMIC DNA]</scope>
    <source>
        <strain>ATCC 10259 / CBS 5796 / DSM 5817 / JCM 2078 / NBRC 1060</strain>
    </source>
</reference>
<reference key="2">
    <citation type="journal article" date="1997" name="Gene">
        <title>Cloning and expression of squalene epoxidase from the pathogenic yeast Candida albicans.</title>
        <authorList>
            <person name="Favre B."/>
            <person name="Ryder N.S."/>
        </authorList>
    </citation>
    <scope>NUCLEOTIDE SEQUENCE [GENOMIC DNA]</scope>
    <scope>FUNCTION</scope>
    <scope>CATALYTIC ACTIVITY</scope>
    <scope>PATHWAY</scope>
    <source>
        <strain>SFI-0124</strain>
    </source>
</reference>
<reference key="3">
    <citation type="journal article" date="2004" name="Proc. Natl. Acad. Sci. U.S.A.">
        <title>The diploid genome sequence of Candida albicans.</title>
        <authorList>
            <person name="Jones T."/>
            <person name="Federspiel N.A."/>
            <person name="Chibana H."/>
            <person name="Dungan J."/>
            <person name="Kalman S."/>
            <person name="Magee B.B."/>
            <person name="Newport G."/>
            <person name="Thorstenson Y.R."/>
            <person name="Agabian N."/>
            <person name="Magee P.T."/>
            <person name="Davis R.W."/>
            <person name="Scherer S."/>
        </authorList>
    </citation>
    <scope>NUCLEOTIDE SEQUENCE [LARGE SCALE GENOMIC DNA]</scope>
    <source>
        <strain>SC5314 / ATCC MYA-2876</strain>
    </source>
</reference>
<reference key="4">
    <citation type="journal article" date="2007" name="Genome Biol.">
        <title>Assembly of the Candida albicans genome into sixteen supercontigs aligned on the eight chromosomes.</title>
        <authorList>
            <person name="van het Hoog M."/>
            <person name="Rast T.J."/>
            <person name="Martchenko M."/>
            <person name="Grindle S."/>
            <person name="Dignard D."/>
            <person name="Hogues H."/>
            <person name="Cuomo C."/>
            <person name="Berriman M."/>
            <person name="Scherer S."/>
            <person name="Magee B.B."/>
            <person name="Whiteway M."/>
            <person name="Chibana H."/>
            <person name="Nantel A."/>
            <person name="Magee P.T."/>
        </authorList>
    </citation>
    <scope>GENOME REANNOTATION</scope>
    <source>
        <strain>SC5314 / ATCC MYA-2876</strain>
    </source>
</reference>
<reference key="5">
    <citation type="journal article" date="2013" name="Genome Biol.">
        <title>Assembly of a phased diploid Candida albicans genome facilitates allele-specific measurements and provides a simple model for repeat and indel structure.</title>
        <authorList>
            <person name="Muzzey D."/>
            <person name="Schwartz K."/>
            <person name="Weissman J.S."/>
            <person name="Sherlock G."/>
        </authorList>
    </citation>
    <scope>NUCLEOTIDE SEQUENCE [LARGE SCALE GENOMIC DNA]</scope>
    <scope>GENOME REANNOTATION</scope>
    <source>
        <strain>SC5314 / ATCC MYA-2876</strain>
    </source>
</reference>
<reference key="6">
    <citation type="journal article" date="1984" name="Biochim. Biophys. Acta">
        <title>Properties of a particulate squalene epoxidase from Candida albicans.</title>
        <authorList>
            <person name="Ryder N.S."/>
            <person name="Dupont M.C."/>
        </authorList>
    </citation>
    <scope>FUNCTION</scope>
    <scope>CATALYTIC ACTIVITY</scope>
    <scope>BIOPHYSICOCHEMICAL PROPERTIES</scope>
    <scope>ACTIVITY REGULATION</scope>
    <scope>PATHWAY</scope>
</reference>
<reference key="7">
    <citation type="journal article" date="1985" name="Biochem. J.">
        <title>Inhibition of squalene epoxidase by allylamine antimycotic compounds. A comparative study of the fungal and mammalian enzymes.</title>
        <authorList>
            <person name="Ryder N.S."/>
            <person name="Dupont M.C."/>
        </authorList>
    </citation>
    <scope>CATALYTIC ACTIVITY</scope>
    <scope>ACTIVITY REGULATION</scope>
</reference>
<reference key="8">
    <citation type="journal article" date="2005" name="J. Antimicrob. Chemother.">
        <title>Squalene epoxidase encoded by ERG1 affects morphogenesis and drug susceptibilities of Candida albicans.</title>
        <authorList>
            <person name="Pasrija R."/>
            <person name="Krishnamurthy S."/>
            <person name="Prasad T."/>
            <person name="Ernst J.F."/>
            <person name="Prasad R."/>
        </authorList>
    </citation>
    <scope>FUNCTION</scope>
    <scope>DISRUPTION PHENOTYPE</scope>
</reference>
<accession>Q92206</accession>
<accession>A0A1D8PEC8</accession>
<accession>Q59QB2</accession>
<evidence type="ECO:0000250" key="1">
    <source>
        <dbReference type="UniProtKB" id="P32476"/>
    </source>
</evidence>
<evidence type="ECO:0000250" key="2">
    <source>
        <dbReference type="UniProtKB" id="Q14534"/>
    </source>
</evidence>
<evidence type="ECO:0000255" key="3"/>
<evidence type="ECO:0000269" key="4">
    <source>
    </source>
</evidence>
<evidence type="ECO:0000269" key="5">
    <source>
    </source>
</evidence>
<evidence type="ECO:0000269" key="6">
    <source>
    </source>
</evidence>
<evidence type="ECO:0000269" key="7">
    <source>
    </source>
</evidence>
<evidence type="ECO:0000303" key="8">
    <source>
    </source>
</evidence>
<evidence type="ECO:0000303" key="9">
    <source ref="1"/>
</evidence>
<evidence type="ECO:0000305" key="10"/>